<sequence>MARIAGIDLPNNKQLQIALTSIYGIGRSRALEICKKTGILPEKRAKDLDNEEVNKLRKIIESDYVVEGKLRSELAMSIKRLMDIACYRGLRHRKGLPLRGQRTKTNARTRKGKRKTVANKKIAAK</sequence>
<accession>B5RM58</accession>
<comment type="function">
    <text evidence="1">Located at the top of the head of the 30S subunit, it contacts several helices of the 16S rRNA. In the 70S ribosome it contacts the 23S rRNA (bridge B1a) and protein L5 of the 50S subunit (bridge B1b), connecting the 2 subunits; these bridges are implicated in subunit movement. Contacts the tRNAs in the A and P-sites.</text>
</comment>
<comment type="subunit">
    <text evidence="1">Part of the 30S ribosomal subunit. Forms a loose heterodimer with protein S19. Forms two bridges to the 50S subunit in the 70S ribosome.</text>
</comment>
<comment type="similarity">
    <text evidence="1">Belongs to the universal ribosomal protein uS13 family.</text>
</comment>
<organism>
    <name type="scientific">Borrelia duttonii (strain Ly)</name>
    <dbReference type="NCBI Taxonomy" id="412419"/>
    <lineage>
        <taxon>Bacteria</taxon>
        <taxon>Pseudomonadati</taxon>
        <taxon>Spirochaetota</taxon>
        <taxon>Spirochaetia</taxon>
        <taxon>Spirochaetales</taxon>
        <taxon>Borreliaceae</taxon>
        <taxon>Borrelia</taxon>
    </lineage>
</organism>
<protein>
    <recommendedName>
        <fullName evidence="1">Small ribosomal subunit protein uS13</fullName>
    </recommendedName>
    <alternativeName>
        <fullName evidence="3">30S ribosomal protein S13</fullName>
    </alternativeName>
</protein>
<gene>
    <name evidence="1" type="primary">rpsM</name>
    <name type="ordered locus">BDU_503</name>
</gene>
<dbReference type="EMBL" id="CP000976">
    <property type="protein sequence ID" value="ACH93444.1"/>
    <property type="molecule type" value="Genomic_DNA"/>
</dbReference>
<dbReference type="RefSeq" id="WP_012538253.1">
    <property type="nucleotide sequence ID" value="NC_011229.1"/>
</dbReference>
<dbReference type="SMR" id="B5RM58"/>
<dbReference type="STRING" id="412419.BDU_503"/>
<dbReference type="KEGG" id="bdu:BDU_503"/>
<dbReference type="eggNOG" id="COG0099">
    <property type="taxonomic scope" value="Bacteria"/>
</dbReference>
<dbReference type="HOGENOM" id="CLU_103849_1_2_12"/>
<dbReference type="OrthoDB" id="9803610at2"/>
<dbReference type="Proteomes" id="UP000000611">
    <property type="component" value="Chromosome"/>
</dbReference>
<dbReference type="GO" id="GO:0005829">
    <property type="term" value="C:cytosol"/>
    <property type="evidence" value="ECO:0007669"/>
    <property type="project" value="TreeGrafter"/>
</dbReference>
<dbReference type="GO" id="GO:0015935">
    <property type="term" value="C:small ribosomal subunit"/>
    <property type="evidence" value="ECO:0007669"/>
    <property type="project" value="TreeGrafter"/>
</dbReference>
<dbReference type="GO" id="GO:0019843">
    <property type="term" value="F:rRNA binding"/>
    <property type="evidence" value="ECO:0007669"/>
    <property type="project" value="UniProtKB-UniRule"/>
</dbReference>
<dbReference type="GO" id="GO:0003735">
    <property type="term" value="F:structural constituent of ribosome"/>
    <property type="evidence" value="ECO:0007669"/>
    <property type="project" value="InterPro"/>
</dbReference>
<dbReference type="GO" id="GO:0000049">
    <property type="term" value="F:tRNA binding"/>
    <property type="evidence" value="ECO:0007669"/>
    <property type="project" value="UniProtKB-UniRule"/>
</dbReference>
<dbReference type="GO" id="GO:0006412">
    <property type="term" value="P:translation"/>
    <property type="evidence" value="ECO:0007669"/>
    <property type="project" value="UniProtKB-UniRule"/>
</dbReference>
<dbReference type="FunFam" id="1.10.8.50:FF:000001">
    <property type="entry name" value="30S ribosomal protein S13"/>
    <property type="match status" value="1"/>
</dbReference>
<dbReference type="FunFam" id="4.10.910.10:FF:000001">
    <property type="entry name" value="30S ribosomal protein S13"/>
    <property type="match status" value="1"/>
</dbReference>
<dbReference type="Gene3D" id="1.10.8.50">
    <property type="match status" value="1"/>
</dbReference>
<dbReference type="Gene3D" id="4.10.910.10">
    <property type="entry name" value="30s ribosomal protein s13, domain 2"/>
    <property type="match status" value="1"/>
</dbReference>
<dbReference type="HAMAP" id="MF_01315">
    <property type="entry name" value="Ribosomal_uS13"/>
    <property type="match status" value="1"/>
</dbReference>
<dbReference type="InterPro" id="IPR027437">
    <property type="entry name" value="Rbsml_uS13_C"/>
</dbReference>
<dbReference type="InterPro" id="IPR001892">
    <property type="entry name" value="Ribosomal_uS13"/>
</dbReference>
<dbReference type="InterPro" id="IPR010979">
    <property type="entry name" value="Ribosomal_uS13-like_H2TH"/>
</dbReference>
<dbReference type="InterPro" id="IPR019980">
    <property type="entry name" value="Ribosomal_uS13_bac-type"/>
</dbReference>
<dbReference type="InterPro" id="IPR018269">
    <property type="entry name" value="Ribosomal_uS13_CS"/>
</dbReference>
<dbReference type="NCBIfam" id="TIGR03631">
    <property type="entry name" value="uS13_bact"/>
    <property type="match status" value="1"/>
</dbReference>
<dbReference type="PANTHER" id="PTHR10871">
    <property type="entry name" value="30S RIBOSOMAL PROTEIN S13/40S RIBOSOMAL PROTEIN S18"/>
    <property type="match status" value="1"/>
</dbReference>
<dbReference type="PANTHER" id="PTHR10871:SF1">
    <property type="entry name" value="SMALL RIBOSOMAL SUBUNIT PROTEIN US13M"/>
    <property type="match status" value="1"/>
</dbReference>
<dbReference type="Pfam" id="PF00416">
    <property type="entry name" value="Ribosomal_S13"/>
    <property type="match status" value="1"/>
</dbReference>
<dbReference type="PIRSF" id="PIRSF002134">
    <property type="entry name" value="Ribosomal_S13"/>
    <property type="match status" value="1"/>
</dbReference>
<dbReference type="SUPFAM" id="SSF46946">
    <property type="entry name" value="S13-like H2TH domain"/>
    <property type="match status" value="1"/>
</dbReference>
<dbReference type="PROSITE" id="PS00646">
    <property type="entry name" value="RIBOSOMAL_S13_1"/>
    <property type="match status" value="1"/>
</dbReference>
<dbReference type="PROSITE" id="PS50159">
    <property type="entry name" value="RIBOSOMAL_S13_2"/>
    <property type="match status" value="1"/>
</dbReference>
<keyword id="KW-0687">Ribonucleoprotein</keyword>
<keyword id="KW-0689">Ribosomal protein</keyword>
<keyword id="KW-0694">RNA-binding</keyword>
<keyword id="KW-0699">rRNA-binding</keyword>
<keyword id="KW-0820">tRNA-binding</keyword>
<name>RS13_BORDL</name>
<proteinExistence type="inferred from homology"/>
<feature type="chain" id="PRO_1000141224" description="Small ribosomal subunit protein uS13">
    <location>
        <begin position="1"/>
        <end position="125"/>
    </location>
</feature>
<feature type="region of interest" description="Disordered" evidence="2">
    <location>
        <begin position="101"/>
        <end position="125"/>
    </location>
</feature>
<reference key="1">
    <citation type="journal article" date="2008" name="PLoS Genet.">
        <title>The genome of Borrelia recurrentis, the agent of deadly louse-borne relapsing fever, is a degraded subset of tick-borne Borrelia duttonii.</title>
        <authorList>
            <person name="Lescot M."/>
            <person name="Audic S."/>
            <person name="Robert C."/>
            <person name="Nguyen T.T."/>
            <person name="Blanc G."/>
            <person name="Cutler S.J."/>
            <person name="Wincker P."/>
            <person name="Couloux A."/>
            <person name="Claverie J.-M."/>
            <person name="Raoult D."/>
            <person name="Drancourt M."/>
        </authorList>
    </citation>
    <scope>NUCLEOTIDE SEQUENCE [LARGE SCALE GENOMIC DNA]</scope>
    <source>
        <strain>Ly</strain>
    </source>
</reference>
<evidence type="ECO:0000255" key="1">
    <source>
        <dbReference type="HAMAP-Rule" id="MF_01315"/>
    </source>
</evidence>
<evidence type="ECO:0000256" key="2">
    <source>
        <dbReference type="SAM" id="MobiDB-lite"/>
    </source>
</evidence>
<evidence type="ECO:0000305" key="3"/>